<keyword id="KW-0249">Electron transport</keyword>
<keyword id="KW-0472">Membrane</keyword>
<keyword id="KW-0496">Mitochondrion</keyword>
<keyword id="KW-0999">Mitochondrion inner membrane</keyword>
<keyword id="KW-0679">Respiratory chain</keyword>
<keyword id="KW-0812">Transmembrane</keyword>
<keyword id="KW-1133">Transmembrane helix</keyword>
<keyword id="KW-0813">Transport</keyword>
<dbReference type="EMBL" id="AF495660">
    <property type="protein sequence ID" value="AAM18519.1"/>
    <property type="molecule type" value="mRNA"/>
</dbReference>
<dbReference type="SMR" id="Q8SPS2"/>
<dbReference type="GO" id="GO:0005743">
    <property type="term" value="C:mitochondrial inner membrane"/>
    <property type="evidence" value="ECO:0007669"/>
    <property type="project" value="UniProtKB-SubCell"/>
</dbReference>
<dbReference type="GO" id="GO:0045271">
    <property type="term" value="C:respiratory chain complex I"/>
    <property type="evidence" value="ECO:0000250"/>
    <property type="project" value="UniProtKB"/>
</dbReference>
<dbReference type="InterPro" id="IPR017384">
    <property type="entry name" value="NADH_Ub_cplx-1_asu_su-1"/>
</dbReference>
<dbReference type="PANTHER" id="PTHR17098:SF2">
    <property type="entry name" value="NADH DEHYDROGENASE [UBIQUINONE] 1 ALPHA SUBCOMPLEX SUBUNIT 1"/>
    <property type="match status" value="1"/>
</dbReference>
<dbReference type="PANTHER" id="PTHR17098">
    <property type="entry name" value="NADH-UBIQUINONE OXIDOREDUCTASE MWFE SUBUNIT"/>
    <property type="match status" value="1"/>
</dbReference>
<dbReference type="Pfam" id="PF15879">
    <property type="entry name" value="MWFE"/>
    <property type="match status" value="1"/>
</dbReference>
<dbReference type="PIRSF" id="PIRSF038095">
    <property type="entry name" value="NDUA1"/>
    <property type="match status" value="1"/>
</dbReference>
<feature type="chain" id="PRO_0000251798" description="NADH dehydrogenase [ubiquinone] 1 alpha subcomplex subunit 1">
    <location>
        <begin position="1"/>
        <end position="70"/>
    </location>
</feature>
<feature type="transmembrane region" description="Helical" evidence="2">
    <location>
        <begin position="1"/>
        <end position="21"/>
    </location>
</feature>
<reference key="1">
    <citation type="journal article" date="2002" name="J. Biol. Chem.">
        <title>Species-specific and mutant MWFE proteins. Their effect on the assembly of a functional mammalian mitochondrial complex I.</title>
        <authorList>
            <person name="Yadava N."/>
            <person name="Potluri P."/>
            <person name="Smith E.N."/>
            <person name="Bisevac A."/>
            <person name="Scheffler I.E."/>
        </authorList>
    </citation>
    <scope>NUCLEOTIDE SEQUENCE [MRNA]</scope>
</reference>
<protein>
    <recommendedName>
        <fullName>NADH dehydrogenase [ubiquinone] 1 alpha subcomplex subunit 1</fullName>
    </recommendedName>
    <alternativeName>
        <fullName>Complex I-MWFE</fullName>
        <shortName>CI-MWFE</shortName>
    </alternativeName>
    <alternativeName>
        <fullName>NADH-ubiquinone oxidoreductase MWFE subunit</fullName>
    </alternativeName>
</protein>
<gene>
    <name type="primary">NDUFA1</name>
</gene>
<proteinExistence type="inferred from homology"/>
<organism>
    <name type="scientific">Varecia rubra</name>
    <name type="common">Red ruffed lemur</name>
    <name type="synonym">Varecia variegata rubra</name>
    <dbReference type="NCBI Taxonomy" id="554167"/>
    <lineage>
        <taxon>Eukaryota</taxon>
        <taxon>Metazoa</taxon>
        <taxon>Chordata</taxon>
        <taxon>Craniata</taxon>
        <taxon>Vertebrata</taxon>
        <taxon>Euteleostomi</taxon>
        <taxon>Mammalia</taxon>
        <taxon>Eutheria</taxon>
        <taxon>Euarchontoglires</taxon>
        <taxon>Primates</taxon>
        <taxon>Strepsirrhini</taxon>
        <taxon>Lemuriformes</taxon>
        <taxon>Lemuridae</taxon>
        <taxon>Varecia</taxon>
    </lineage>
</organism>
<sequence>MWFEILPGIAVMGTCLVIPGLATAYIHRFTNGGKEKRVAHFVYHWDLMERDRHISGVNRYYVSKGLENID</sequence>
<accession>Q8SPS2</accession>
<name>NDUA1_VARRB</name>
<comment type="function">
    <text evidence="1">Accessory subunit of the mitochondrial membrane respiratory chain NADH dehydrogenase (Complex I), that is believed not to be involved in catalysis. Complex I functions in the transfer of electrons from NADH to the respiratory chain. The immediate electron acceptor for the enzyme is believed to be ubiquinone.</text>
</comment>
<comment type="subunit">
    <text evidence="1">Complex I is composed of 45 different subunits.</text>
</comment>
<comment type="subcellular location">
    <subcellularLocation>
        <location evidence="1">Mitochondrion inner membrane</location>
        <topology evidence="2">Single-pass membrane protein</topology>
        <orientation evidence="1">Matrix side</orientation>
    </subcellularLocation>
</comment>
<comment type="similarity">
    <text evidence="3">Belongs to the complex I NDUFA1 subunit family.</text>
</comment>
<evidence type="ECO:0000250" key="1">
    <source>
        <dbReference type="UniProtKB" id="O15239"/>
    </source>
</evidence>
<evidence type="ECO:0000255" key="2"/>
<evidence type="ECO:0000305" key="3"/>